<organism>
    <name type="scientific">Salmonella newport (strain SL254)</name>
    <dbReference type="NCBI Taxonomy" id="423368"/>
    <lineage>
        <taxon>Bacteria</taxon>
        <taxon>Pseudomonadati</taxon>
        <taxon>Pseudomonadota</taxon>
        <taxon>Gammaproteobacteria</taxon>
        <taxon>Enterobacterales</taxon>
        <taxon>Enterobacteriaceae</taxon>
        <taxon>Salmonella</taxon>
    </lineage>
</organism>
<sequence>MNLSRQEQRTLHVLAKGGRITHIRDASGRVTAVECYSREGLLLADCTLAVFKKLKTKKLIKSVNGQPYRINTTGLNSVRAQPDNR</sequence>
<proteinExistence type="inferred from homology"/>
<reference key="1">
    <citation type="journal article" date="2011" name="J. Bacteriol.">
        <title>Comparative genomics of 28 Salmonella enterica isolates: evidence for CRISPR-mediated adaptive sublineage evolution.</title>
        <authorList>
            <person name="Fricke W.F."/>
            <person name="Mammel M.K."/>
            <person name="McDermott P.F."/>
            <person name="Tartera C."/>
            <person name="White D.G."/>
            <person name="Leclerc J.E."/>
            <person name="Ravel J."/>
            <person name="Cebula T.A."/>
        </authorList>
    </citation>
    <scope>NUCLEOTIDE SEQUENCE [LARGE SCALE GENOMIC DNA]</scope>
    <source>
        <strain>SL254</strain>
    </source>
</reference>
<evidence type="ECO:0000255" key="1">
    <source>
        <dbReference type="HAMAP-Rule" id="MF_00827"/>
    </source>
</evidence>
<name>YJHX_SALNS</name>
<comment type="similarity">
    <text evidence="1">Belongs to the UPF0386 family.</text>
</comment>
<dbReference type="EMBL" id="CP001113">
    <property type="protein sequence ID" value="ACF62530.1"/>
    <property type="molecule type" value="Genomic_DNA"/>
</dbReference>
<dbReference type="RefSeq" id="WP_001054381.1">
    <property type="nucleotide sequence ID" value="NZ_CCMR01000003.1"/>
</dbReference>
<dbReference type="KEGG" id="see:SNSL254_A4853"/>
<dbReference type="HOGENOM" id="CLU_164736_0_0_6"/>
<dbReference type="Proteomes" id="UP000008824">
    <property type="component" value="Chromosome"/>
</dbReference>
<dbReference type="HAMAP" id="MF_00827">
    <property type="entry name" value="UPF0386"/>
    <property type="match status" value="1"/>
</dbReference>
<dbReference type="InterPro" id="IPR018654">
    <property type="entry name" value="YjhX_toxin"/>
</dbReference>
<dbReference type="NCBIfam" id="NF010240">
    <property type="entry name" value="PRK13687.1"/>
    <property type="match status" value="1"/>
</dbReference>
<dbReference type="Pfam" id="PF09857">
    <property type="entry name" value="YjhX_toxin"/>
    <property type="match status" value="1"/>
</dbReference>
<protein>
    <recommendedName>
        <fullName evidence="1">UPF0386 protein YjhX</fullName>
    </recommendedName>
</protein>
<accession>B4T4A3</accession>
<gene>
    <name evidence="1" type="primary">yjhX</name>
    <name type="ordered locus">SNSL254_A4853</name>
</gene>
<feature type="chain" id="PRO_1000200711" description="UPF0386 protein YjhX">
    <location>
        <begin position="1"/>
        <end position="85"/>
    </location>
</feature>